<proteinExistence type="inferred from homology"/>
<sequence length="260" mass="28186">MALRRPMVAGNWKMNGSAQLAQELFKKFATKLQDDSAEVVLCPPSIYLESVRQLLDENKEALNGCLVRMGAQNLSQHDFGAYTGEISGQMLKDSGCRYVIIGHSERRRMYGETSVIVAEKFAAAQKHGLTPILCVGESGPAREARRTFEVIAEELDVVIEKNGTMAFDNAIIAYEPLWAVGTGKSATPEQAQEVHAFIRKRLSEVSPFIGENIRILYGGSVTPSNAADLFAQPDVDGGLIGGVSLNATEFLSLCTIAMSA</sequence>
<accession>B0TQA6</accession>
<dbReference type="EC" id="5.3.1.1" evidence="1"/>
<dbReference type="EMBL" id="CP000931">
    <property type="protein sequence ID" value="ABZ77698.1"/>
    <property type="molecule type" value="Genomic_DNA"/>
</dbReference>
<dbReference type="RefSeq" id="WP_012278222.1">
    <property type="nucleotide sequence ID" value="NC_010334.1"/>
</dbReference>
<dbReference type="SMR" id="B0TQA6"/>
<dbReference type="STRING" id="458817.Shal_3151"/>
<dbReference type="KEGG" id="shl:Shal_3151"/>
<dbReference type="eggNOG" id="COG0149">
    <property type="taxonomic scope" value="Bacteria"/>
</dbReference>
<dbReference type="HOGENOM" id="CLU_024251_2_3_6"/>
<dbReference type="OrthoDB" id="9809429at2"/>
<dbReference type="UniPathway" id="UPA00109">
    <property type="reaction ID" value="UER00189"/>
</dbReference>
<dbReference type="UniPathway" id="UPA00138"/>
<dbReference type="Proteomes" id="UP000001317">
    <property type="component" value="Chromosome"/>
</dbReference>
<dbReference type="GO" id="GO:0005829">
    <property type="term" value="C:cytosol"/>
    <property type="evidence" value="ECO:0007669"/>
    <property type="project" value="TreeGrafter"/>
</dbReference>
<dbReference type="GO" id="GO:0004807">
    <property type="term" value="F:triose-phosphate isomerase activity"/>
    <property type="evidence" value="ECO:0007669"/>
    <property type="project" value="UniProtKB-UniRule"/>
</dbReference>
<dbReference type="GO" id="GO:0006094">
    <property type="term" value="P:gluconeogenesis"/>
    <property type="evidence" value="ECO:0007669"/>
    <property type="project" value="UniProtKB-UniRule"/>
</dbReference>
<dbReference type="GO" id="GO:0046166">
    <property type="term" value="P:glyceraldehyde-3-phosphate biosynthetic process"/>
    <property type="evidence" value="ECO:0007669"/>
    <property type="project" value="TreeGrafter"/>
</dbReference>
<dbReference type="GO" id="GO:0019563">
    <property type="term" value="P:glycerol catabolic process"/>
    <property type="evidence" value="ECO:0007669"/>
    <property type="project" value="TreeGrafter"/>
</dbReference>
<dbReference type="GO" id="GO:0006096">
    <property type="term" value="P:glycolytic process"/>
    <property type="evidence" value="ECO:0007669"/>
    <property type="project" value="UniProtKB-UniRule"/>
</dbReference>
<dbReference type="CDD" id="cd00311">
    <property type="entry name" value="TIM"/>
    <property type="match status" value="1"/>
</dbReference>
<dbReference type="FunFam" id="3.20.20.70:FF:000016">
    <property type="entry name" value="Triosephosphate isomerase"/>
    <property type="match status" value="1"/>
</dbReference>
<dbReference type="Gene3D" id="3.20.20.70">
    <property type="entry name" value="Aldolase class I"/>
    <property type="match status" value="1"/>
</dbReference>
<dbReference type="HAMAP" id="MF_00147_B">
    <property type="entry name" value="TIM_B"/>
    <property type="match status" value="1"/>
</dbReference>
<dbReference type="InterPro" id="IPR013785">
    <property type="entry name" value="Aldolase_TIM"/>
</dbReference>
<dbReference type="InterPro" id="IPR035990">
    <property type="entry name" value="TIM_sf"/>
</dbReference>
<dbReference type="InterPro" id="IPR022896">
    <property type="entry name" value="TrioseP_Isoase_bac/euk"/>
</dbReference>
<dbReference type="InterPro" id="IPR000652">
    <property type="entry name" value="Triosephosphate_isomerase"/>
</dbReference>
<dbReference type="InterPro" id="IPR020861">
    <property type="entry name" value="Triosephosphate_isomerase_AS"/>
</dbReference>
<dbReference type="NCBIfam" id="TIGR00419">
    <property type="entry name" value="tim"/>
    <property type="match status" value="1"/>
</dbReference>
<dbReference type="PANTHER" id="PTHR21139">
    <property type="entry name" value="TRIOSEPHOSPHATE ISOMERASE"/>
    <property type="match status" value="1"/>
</dbReference>
<dbReference type="PANTHER" id="PTHR21139:SF42">
    <property type="entry name" value="TRIOSEPHOSPHATE ISOMERASE"/>
    <property type="match status" value="1"/>
</dbReference>
<dbReference type="Pfam" id="PF00121">
    <property type="entry name" value="TIM"/>
    <property type="match status" value="1"/>
</dbReference>
<dbReference type="SUPFAM" id="SSF51351">
    <property type="entry name" value="Triosephosphate isomerase (TIM)"/>
    <property type="match status" value="1"/>
</dbReference>
<dbReference type="PROSITE" id="PS00171">
    <property type="entry name" value="TIM_1"/>
    <property type="match status" value="1"/>
</dbReference>
<dbReference type="PROSITE" id="PS51440">
    <property type="entry name" value="TIM_2"/>
    <property type="match status" value="1"/>
</dbReference>
<keyword id="KW-0963">Cytoplasm</keyword>
<keyword id="KW-0312">Gluconeogenesis</keyword>
<keyword id="KW-0324">Glycolysis</keyword>
<keyword id="KW-0413">Isomerase</keyword>
<organism>
    <name type="scientific">Shewanella halifaxensis (strain HAW-EB4)</name>
    <dbReference type="NCBI Taxonomy" id="458817"/>
    <lineage>
        <taxon>Bacteria</taxon>
        <taxon>Pseudomonadati</taxon>
        <taxon>Pseudomonadota</taxon>
        <taxon>Gammaproteobacteria</taxon>
        <taxon>Alteromonadales</taxon>
        <taxon>Shewanellaceae</taxon>
        <taxon>Shewanella</taxon>
    </lineage>
</organism>
<name>TPIS_SHEHH</name>
<reference key="1">
    <citation type="submission" date="2008-01" db="EMBL/GenBank/DDBJ databases">
        <title>Complete sequence of Shewanella halifaxensis HAW-EB4.</title>
        <authorList>
            <consortium name="US DOE Joint Genome Institute"/>
            <person name="Copeland A."/>
            <person name="Lucas S."/>
            <person name="Lapidus A."/>
            <person name="Glavina del Rio T."/>
            <person name="Dalin E."/>
            <person name="Tice H."/>
            <person name="Bruce D."/>
            <person name="Goodwin L."/>
            <person name="Pitluck S."/>
            <person name="Sims D."/>
            <person name="Brettin T."/>
            <person name="Detter J.C."/>
            <person name="Han C."/>
            <person name="Kuske C.R."/>
            <person name="Schmutz J."/>
            <person name="Larimer F."/>
            <person name="Land M."/>
            <person name="Hauser L."/>
            <person name="Kyrpides N."/>
            <person name="Kim E."/>
            <person name="Zhao J.-S."/>
            <person name="Richardson P."/>
        </authorList>
    </citation>
    <scope>NUCLEOTIDE SEQUENCE [LARGE SCALE GENOMIC DNA]</scope>
    <source>
        <strain>HAW-EB4</strain>
    </source>
</reference>
<comment type="function">
    <text evidence="1">Involved in the gluconeogenesis. Catalyzes stereospecifically the conversion of dihydroxyacetone phosphate (DHAP) to D-glyceraldehyde-3-phosphate (G3P).</text>
</comment>
<comment type="catalytic activity">
    <reaction evidence="1">
        <text>D-glyceraldehyde 3-phosphate = dihydroxyacetone phosphate</text>
        <dbReference type="Rhea" id="RHEA:18585"/>
        <dbReference type="ChEBI" id="CHEBI:57642"/>
        <dbReference type="ChEBI" id="CHEBI:59776"/>
        <dbReference type="EC" id="5.3.1.1"/>
    </reaction>
</comment>
<comment type="pathway">
    <text evidence="1">Carbohydrate biosynthesis; gluconeogenesis.</text>
</comment>
<comment type="pathway">
    <text evidence="1">Carbohydrate degradation; glycolysis; D-glyceraldehyde 3-phosphate from glycerone phosphate: step 1/1.</text>
</comment>
<comment type="subunit">
    <text evidence="1">Homodimer.</text>
</comment>
<comment type="subcellular location">
    <subcellularLocation>
        <location evidence="1">Cytoplasm</location>
    </subcellularLocation>
</comment>
<comment type="similarity">
    <text evidence="1">Belongs to the triosephosphate isomerase family.</text>
</comment>
<gene>
    <name evidence="1" type="primary">tpiA</name>
    <name type="ordered locus">Shal_3151</name>
</gene>
<feature type="chain" id="PRO_1000076660" description="Triosephosphate isomerase">
    <location>
        <begin position="1"/>
        <end position="260"/>
    </location>
</feature>
<feature type="active site" description="Electrophile" evidence="1">
    <location>
        <position position="103"/>
    </location>
</feature>
<feature type="active site" description="Proton acceptor" evidence="1">
    <location>
        <position position="175"/>
    </location>
</feature>
<feature type="binding site" evidence="1">
    <location>
        <begin position="11"/>
        <end position="13"/>
    </location>
    <ligand>
        <name>substrate</name>
    </ligand>
</feature>
<feature type="binding site" evidence="1">
    <location>
        <position position="181"/>
    </location>
    <ligand>
        <name>substrate</name>
    </ligand>
</feature>
<feature type="binding site" evidence="1">
    <location>
        <position position="220"/>
    </location>
    <ligand>
        <name>substrate</name>
    </ligand>
</feature>
<feature type="binding site" evidence="1">
    <location>
        <begin position="241"/>
        <end position="242"/>
    </location>
    <ligand>
        <name>substrate</name>
    </ligand>
</feature>
<evidence type="ECO:0000255" key="1">
    <source>
        <dbReference type="HAMAP-Rule" id="MF_00147"/>
    </source>
</evidence>
<protein>
    <recommendedName>
        <fullName evidence="1">Triosephosphate isomerase</fullName>
        <shortName evidence="1">TIM</shortName>
        <shortName evidence="1">TPI</shortName>
        <ecNumber evidence="1">5.3.1.1</ecNumber>
    </recommendedName>
    <alternativeName>
        <fullName evidence="1">Triose-phosphate isomerase</fullName>
    </alternativeName>
</protein>